<reference key="1">
    <citation type="journal article" date="1990" name="FEBS Lett.">
        <title>Molecular cloning and sequence determination of four different cDNA species coding for alpha-subunits of G proteins from Xenopus laevis oocytes.</title>
        <authorList>
            <person name="Olate J."/>
            <person name="Martinez S."/>
            <person name="Purcell P."/>
            <person name="Jorquera H."/>
            <person name="Codina J."/>
            <person name="Birnbaumer L."/>
            <person name="Allende J.E."/>
        </authorList>
    </citation>
    <scope>NUCLEOTIDE SEQUENCE [MRNA]</scope>
    <source>
        <tissue>Oocyte</tissue>
    </source>
</reference>
<dbReference type="EMBL" id="X56090">
    <property type="protein sequence ID" value="CAA39570.1"/>
    <property type="molecule type" value="mRNA"/>
</dbReference>
<dbReference type="PIR" id="S11046">
    <property type="entry name" value="RGXLI3"/>
</dbReference>
<dbReference type="SMR" id="P27045"/>
<dbReference type="AGR" id="Xenbase:XB-GENE-5738730"/>
<dbReference type="Xenbase" id="XB-GENE-5738730">
    <property type="gene designation" value="gnai3.S"/>
</dbReference>
<dbReference type="Proteomes" id="UP000186698">
    <property type="component" value="Unplaced"/>
</dbReference>
<dbReference type="GO" id="GO:0005813">
    <property type="term" value="C:centrosome"/>
    <property type="evidence" value="ECO:0000250"/>
    <property type="project" value="UniProtKB"/>
</dbReference>
<dbReference type="GO" id="GO:0005737">
    <property type="term" value="C:cytoplasm"/>
    <property type="evidence" value="ECO:0000250"/>
    <property type="project" value="UniProtKB"/>
</dbReference>
<dbReference type="GO" id="GO:0005834">
    <property type="term" value="C:heterotrimeric G-protein complex"/>
    <property type="evidence" value="ECO:0000318"/>
    <property type="project" value="GO_Central"/>
</dbReference>
<dbReference type="GO" id="GO:0030496">
    <property type="term" value="C:midbody"/>
    <property type="evidence" value="ECO:0000250"/>
    <property type="project" value="UniProtKB"/>
</dbReference>
<dbReference type="GO" id="GO:0005886">
    <property type="term" value="C:plasma membrane"/>
    <property type="evidence" value="ECO:0000250"/>
    <property type="project" value="UniProtKB"/>
</dbReference>
<dbReference type="GO" id="GO:0001664">
    <property type="term" value="F:G protein-coupled receptor binding"/>
    <property type="evidence" value="ECO:0000318"/>
    <property type="project" value="GO_Central"/>
</dbReference>
<dbReference type="GO" id="GO:0031683">
    <property type="term" value="F:G-protein beta/gamma-subunit complex binding"/>
    <property type="evidence" value="ECO:0000318"/>
    <property type="project" value="GO_Central"/>
</dbReference>
<dbReference type="GO" id="GO:0019003">
    <property type="term" value="F:GDP binding"/>
    <property type="evidence" value="ECO:0000250"/>
    <property type="project" value="UniProtKB"/>
</dbReference>
<dbReference type="GO" id="GO:0005525">
    <property type="term" value="F:GTP binding"/>
    <property type="evidence" value="ECO:0007669"/>
    <property type="project" value="UniProtKB-KW"/>
</dbReference>
<dbReference type="GO" id="GO:0003924">
    <property type="term" value="F:GTPase activity"/>
    <property type="evidence" value="ECO:0000250"/>
    <property type="project" value="UniProtKB"/>
</dbReference>
<dbReference type="GO" id="GO:0046872">
    <property type="term" value="F:metal ion binding"/>
    <property type="evidence" value="ECO:0007669"/>
    <property type="project" value="UniProtKB-KW"/>
</dbReference>
<dbReference type="GO" id="GO:0007193">
    <property type="term" value="P:adenylate cyclase-inhibiting G protein-coupled receptor signaling pathway"/>
    <property type="evidence" value="ECO:0000250"/>
    <property type="project" value="UniProtKB"/>
</dbReference>
<dbReference type="GO" id="GO:0007188">
    <property type="term" value="P:adenylate cyclase-modulating G protein-coupled receptor signaling pathway"/>
    <property type="evidence" value="ECO:0000318"/>
    <property type="project" value="GO_Central"/>
</dbReference>
<dbReference type="GO" id="GO:0051301">
    <property type="term" value="P:cell division"/>
    <property type="evidence" value="ECO:0000250"/>
    <property type="project" value="UniProtKB"/>
</dbReference>
<dbReference type="GO" id="GO:0007212">
    <property type="term" value="P:G protein-coupled dopamine receptor signaling pathway"/>
    <property type="evidence" value="ECO:0007669"/>
    <property type="project" value="TreeGrafter"/>
</dbReference>
<dbReference type="GO" id="GO:0046039">
    <property type="term" value="P:GTP metabolic process"/>
    <property type="evidence" value="ECO:0000250"/>
    <property type="project" value="UniProtKB"/>
</dbReference>
<dbReference type="CDD" id="cd00066">
    <property type="entry name" value="G-alpha"/>
    <property type="match status" value="1"/>
</dbReference>
<dbReference type="FunFam" id="1.10.400.10:FF:000001">
    <property type="entry name" value="Guanine nucleotide-binding protein G(I) subunit alpha"/>
    <property type="match status" value="1"/>
</dbReference>
<dbReference type="FunFam" id="3.40.50.300:FF:002487">
    <property type="entry name" value="Guanine nucleotide-binding protein G(i) subunit alpha-1"/>
    <property type="match status" value="1"/>
</dbReference>
<dbReference type="FunFam" id="3.40.50.300:FF:000720">
    <property type="entry name" value="Guanine nucleotide-binding protein G(k) subunit alpha"/>
    <property type="match status" value="1"/>
</dbReference>
<dbReference type="Gene3D" id="1.10.400.10">
    <property type="entry name" value="GI Alpha 1, domain 2-like"/>
    <property type="match status" value="1"/>
</dbReference>
<dbReference type="Gene3D" id="3.40.50.300">
    <property type="entry name" value="P-loop containing nucleotide triphosphate hydrolases"/>
    <property type="match status" value="1"/>
</dbReference>
<dbReference type="InterPro" id="IPR001408">
    <property type="entry name" value="Gprotein_alpha_I"/>
</dbReference>
<dbReference type="InterPro" id="IPR001019">
    <property type="entry name" value="Gprotein_alpha_su"/>
</dbReference>
<dbReference type="InterPro" id="IPR011025">
    <property type="entry name" value="GproteinA_insert"/>
</dbReference>
<dbReference type="InterPro" id="IPR027417">
    <property type="entry name" value="P-loop_NTPase"/>
</dbReference>
<dbReference type="PANTHER" id="PTHR10218">
    <property type="entry name" value="GTP-BINDING PROTEIN ALPHA SUBUNIT"/>
    <property type="match status" value="1"/>
</dbReference>
<dbReference type="PANTHER" id="PTHR10218:SF230">
    <property type="entry name" value="GUANINE NUCLEOTIDE-BINDING PROTEIN G(I) SUBUNIT ALPHA-3"/>
    <property type="match status" value="1"/>
</dbReference>
<dbReference type="Pfam" id="PF00503">
    <property type="entry name" value="G-alpha"/>
    <property type="match status" value="1"/>
</dbReference>
<dbReference type="PRINTS" id="PR00318">
    <property type="entry name" value="GPROTEINA"/>
</dbReference>
<dbReference type="PRINTS" id="PR00441">
    <property type="entry name" value="GPROTEINAI"/>
</dbReference>
<dbReference type="SMART" id="SM00275">
    <property type="entry name" value="G_alpha"/>
    <property type="match status" value="1"/>
</dbReference>
<dbReference type="SUPFAM" id="SSF52540">
    <property type="entry name" value="P-loop containing nucleoside triphosphate hydrolases"/>
    <property type="match status" value="1"/>
</dbReference>
<dbReference type="SUPFAM" id="SSF47895">
    <property type="entry name" value="Transducin (alpha subunit), insertion domain"/>
    <property type="match status" value="1"/>
</dbReference>
<dbReference type="PROSITE" id="PS51882">
    <property type="entry name" value="G_ALPHA"/>
    <property type="match status" value="1"/>
</dbReference>
<accession>P27045</accession>
<name>GNAI3_XENLA</name>
<evidence type="ECO:0000250" key="1">
    <source>
        <dbReference type="UniProtKB" id="P08753"/>
    </source>
</evidence>
<evidence type="ECO:0000250" key="2">
    <source>
        <dbReference type="UniProtKB" id="P08754"/>
    </source>
</evidence>
<evidence type="ECO:0000255" key="3">
    <source>
        <dbReference type="PROSITE-ProRule" id="PRU01230"/>
    </source>
</evidence>
<evidence type="ECO:0000305" key="4"/>
<comment type="function">
    <text evidence="1 2">Heterotrimeric guanine nucleotide-binding proteins (G proteins) function as transducers downstream of G protein-coupled receptors (GPCRs) in numerous signaling cascades. The alpha chain contains the guanine nucleotide binding site and alternates between an active, GTP-bound state and an inactive, GDP-bound state. Signaling by an activated GPCR promotes GDP release and GTP binding. The alpha subunit has a low GTPase activity that converts bound GTP to GDP, thereby terminating the signal (By similarity). Both GDP release and GTP hydrolysis are modulated by numerous regulatory proteins (By similarity). Signaling is mediated via effector proteins, such as adenylate cyclase. Inhibits adenylate cyclase activity, leading to decreased intracellular cAMP levels (By similarity). Stimulates the activity of receptor-regulated K(+) channels (By similarity). The active GTP-bound form prevents the association of RGS14 with centrosomes and is required for the translocation of RGS14 from the cytoplasm to the plasma membrane. May play a role in cell division (By similarity). The active GTP-bound form activates the calcium permeant TRPC5 ion channels (By similarity).</text>
</comment>
<comment type="subunit">
    <text evidence="2">Heterotrimeric G proteins are composed of 3 units; alpha, beta and gamma. The alpha subunit contains the guanine nucleotide binding site (By similarity). GTP binding causes dissociation of the heterotrimer, liberating the individual subunits so that they can interact with downstream effector proteins.</text>
</comment>
<comment type="subcellular location">
    <subcellularLocation>
        <location evidence="2">Cytoplasm</location>
    </subcellularLocation>
    <subcellularLocation>
        <location evidence="2">Cell membrane</location>
    </subcellularLocation>
    <subcellularLocation>
        <location evidence="2">Cytoplasm</location>
        <location evidence="2">Cytoskeleton</location>
        <location evidence="2">Microtubule organizing center</location>
        <location evidence="2">Centrosome</location>
    </subcellularLocation>
    <subcellularLocation>
        <location evidence="2">Membrane</location>
        <topology evidence="2">Lipid-anchor</topology>
    </subcellularLocation>
    <text evidence="2">Localizes in the centrosomes of interphase and mitotic cells. Detected at the cleavage furrow and/or the midbody.</text>
</comment>
<comment type="similarity">
    <text evidence="4">Belongs to the G-alpha family. G(i/o/t/z) subfamily.</text>
</comment>
<gene>
    <name type="primary">gnai3</name>
</gene>
<proteinExistence type="evidence at transcript level"/>
<protein>
    <recommendedName>
        <fullName>Guanine nucleotide-binding protein G(i) subunit alpha-3</fullName>
    </recommendedName>
    <alternativeName>
        <fullName>G(i) alpha-3</fullName>
    </alternativeName>
</protein>
<sequence>REAAERSKMIDRNLREDGEKASKEVKLLLLGAGESGKSTIVKQMKIIHEDGYSEEECRQYKVVVYSNTIQSIIAIIRAMGRLRIDFGDVARADDARQLFVLASSAEEGVMSPELAGVIQRLWEDSGVQACFSRSREYQLNDSASYYLSDIERIAQGSYIPTQQDVLRTRVKTTGIVETHFTFKDLYFKMFDVGGQRSERKKWIHCFEGVTAIIFCVALSDYDLLLAEDEEMNRMHESMKLFDSICNNKWFIDTSIILFLNKKDLFEEKISRSPLTICYPEYSGSNTYEEAAAYIQCQFEDLNRRKDTKEIYTHFTCATDTKNVQFVFDAVTDVIIKSNLMECGLY</sequence>
<organism>
    <name type="scientific">Xenopus laevis</name>
    <name type="common">African clawed frog</name>
    <dbReference type="NCBI Taxonomy" id="8355"/>
    <lineage>
        <taxon>Eukaryota</taxon>
        <taxon>Metazoa</taxon>
        <taxon>Chordata</taxon>
        <taxon>Craniata</taxon>
        <taxon>Vertebrata</taxon>
        <taxon>Euteleostomi</taxon>
        <taxon>Amphibia</taxon>
        <taxon>Batrachia</taxon>
        <taxon>Anura</taxon>
        <taxon>Pipoidea</taxon>
        <taxon>Pipidae</taxon>
        <taxon>Xenopodinae</taxon>
        <taxon>Xenopus</taxon>
        <taxon>Xenopus</taxon>
    </lineage>
</organism>
<feature type="chain" id="PRO_0000203695" description="Guanine nucleotide-binding protein G(i) subunit alpha-3">
    <location>
        <begin position="1" status="less than"/>
        <end position="345"/>
    </location>
</feature>
<feature type="domain" description="G-alpha" evidence="3">
    <location>
        <begin position="23"/>
        <end position="345"/>
    </location>
</feature>
<feature type="region of interest" description="G1 motif" evidence="3">
    <location>
        <begin position="26"/>
        <end position="39"/>
    </location>
</feature>
<feature type="region of interest" description="G2 motif" evidence="3">
    <location>
        <begin position="164"/>
        <end position="172"/>
    </location>
</feature>
<feature type="region of interest" description="G3 motif" evidence="3">
    <location>
        <begin position="187"/>
        <end position="196"/>
    </location>
</feature>
<feature type="region of interest" description="G4 motif" evidence="3">
    <location>
        <begin position="256"/>
        <end position="263"/>
    </location>
</feature>
<feature type="region of interest" description="G5 motif" evidence="3">
    <location>
        <begin position="315"/>
        <end position="320"/>
    </location>
</feature>
<feature type="binding site" evidence="2">
    <location>
        <position position="33"/>
    </location>
    <ligand>
        <name>GTP</name>
        <dbReference type="ChEBI" id="CHEBI:37565"/>
    </ligand>
</feature>
<feature type="binding site" evidence="2">
    <location>
        <position position="34"/>
    </location>
    <ligand>
        <name>GTP</name>
        <dbReference type="ChEBI" id="CHEBI:37565"/>
    </ligand>
</feature>
<feature type="binding site" evidence="2">
    <location>
        <position position="35"/>
    </location>
    <ligand>
        <name>GTP</name>
        <dbReference type="ChEBI" id="CHEBI:37565"/>
    </ligand>
</feature>
<feature type="binding site" evidence="2">
    <location>
        <position position="36"/>
    </location>
    <ligand>
        <name>GTP</name>
        <dbReference type="ChEBI" id="CHEBI:37565"/>
    </ligand>
</feature>
<feature type="binding site" evidence="2">
    <location>
        <position position="37"/>
    </location>
    <ligand>
        <name>GTP</name>
        <dbReference type="ChEBI" id="CHEBI:37565"/>
    </ligand>
</feature>
<feature type="binding site" evidence="2">
    <location>
        <position position="38"/>
    </location>
    <ligand>
        <name>GTP</name>
        <dbReference type="ChEBI" id="CHEBI:37565"/>
    </ligand>
</feature>
<feature type="binding site" evidence="2">
    <location>
        <position position="38"/>
    </location>
    <ligand>
        <name>Mg(2+)</name>
        <dbReference type="ChEBI" id="CHEBI:18420"/>
    </ligand>
</feature>
<feature type="binding site" evidence="2">
    <location>
        <position position="39"/>
    </location>
    <ligand>
        <name>GTP</name>
        <dbReference type="ChEBI" id="CHEBI:37565"/>
    </ligand>
</feature>
<feature type="binding site" evidence="2">
    <location>
        <position position="141"/>
    </location>
    <ligand>
        <name>GTP</name>
        <dbReference type="ChEBI" id="CHEBI:37565"/>
    </ligand>
</feature>
<feature type="binding site" evidence="2">
    <location>
        <position position="142"/>
    </location>
    <ligand>
        <name>GTP</name>
        <dbReference type="ChEBI" id="CHEBI:37565"/>
    </ligand>
</feature>
<feature type="binding site" evidence="2">
    <location>
        <position position="166"/>
    </location>
    <ligand>
        <name>GTP</name>
        <dbReference type="ChEBI" id="CHEBI:37565"/>
    </ligand>
</feature>
<feature type="binding site" evidence="2">
    <location>
        <position position="167"/>
    </location>
    <ligand>
        <name>GTP</name>
        <dbReference type="ChEBI" id="CHEBI:37565"/>
    </ligand>
</feature>
<feature type="binding site" evidence="2">
    <location>
        <position position="168"/>
    </location>
    <ligand>
        <name>GTP</name>
        <dbReference type="ChEBI" id="CHEBI:37565"/>
    </ligand>
</feature>
<feature type="binding site" evidence="2">
    <location>
        <position position="169"/>
    </location>
    <ligand>
        <name>GTP</name>
        <dbReference type="ChEBI" id="CHEBI:37565"/>
    </ligand>
</feature>
<feature type="binding site" evidence="2">
    <location>
        <position position="170"/>
    </location>
    <ligand>
        <name>GTP</name>
        <dbReference type="ChEBI" id="CHEBI:37565"/>
    </ligand>
</feature>
<feature type="binding site" evidence="2">
    <location>
        <position position="171"/>
    </location>
    <ligand>
        <name>GTP</name>
        <dbReference type="ChEBI" id="CHEBI:37565"/>
    </ligand>
</feature>
<feature type="binding site" evidence="2">
    <location>
        <position position="172"/>
    </location>
    <ligand>
        <name>GTP</name>
        <dbReference type="ChEBI" id="CHEBI:37565"/>
    </ligand>
</feature>
<feature type="binding site" evidence="2">
    <location>
        <position position="172"/>
    </location>
    <ligand>
        <name>Mg(2+)</name>
        <dbReference type="ChEBI" id="CHEBI:18420"/>
    </ligand>
</feature>
<feature type="binding site" evidence="2">
    <location>
        <position position="192"/>
    </location>
    <ligand>
        <name>GTP</name>
        <dbReference type="ChEBI" id="CHEBI:37565"/>
    </ligand>
</feature>
<feature type="binding site" evidence="2">
    <location>
        <position position="194"/>
    </location>
    <ligand>
        <name>GTP</name>
        <dbReference type="ChEBI" id="CHEBI:37565"/>
    </ligand>
</feature>
<feature type="binding site" evidence="2">
    <location>
        <position position="260"/>
    </location>
    <ligand>
        <name>GTP</name>
        <dbReference type="ChEBI" id="CHEBI:37565"/>
    </ligand>
</feature>
<feature type="binding site" evidence="2">
    <location>
        <position position="261"/>
    </location>
    <ligand>
        <name>GTP</name>
        <dbReference type="ChEBI" id="CHEBI:37565"/>
    </ligand>
</feature>
<feature type="binding site" evidence="2">
    <location>
        <position position="263"/>
    </location>
    <ligand>
        <name>GTP</name>
        <dbReference type="ChEBI" id="CHEBI:37565"/>
    </ligand>
</feature>
<feature type="binding site" evidence="2">
    <location>
        <position position="264"/>
    </location>
    <ligand>
        <name>GTP</name>
        <dbReference type="ChEBI" id="CHEBI:37565"/>
    </ligand>
</feature>
<feature type="binding site" evidence="2">
    <location>
        <position position="316"/>
    </location>
    <ligand>
        <name>GTP</name>
        <dbReference type="ChEBI" id="CHEBI:37565"/>
    </ligand>
</feature>
<feature type="binding site" evidence="2">
    <location>
        <position position="317"/>
    </location>
    <ligand>
        <name>GTP</name>
        <dbReference type="ChEBI" id="CHEBI:37565"/>
    </ligand>
</feature>
<feature type="binding site" evidence="2">
    <location>
        <position position="318"/>
    </location>
    <ligand>
        <name>GTP</name>
        <dbReference type="ChEBI" id="CHEBI:37565"/>
    </ligand>
</feature>
<feature type="non-terminal residue">
    <location>
        <position position="1"/>
    </location>
</feature>
<keyword id="KW-0131">Cell cycle</keyword>
<keyword id="KW-0132">Cell division</keyword>
<keyword id="KW-1003">Cell membrane</keyword>
<keyword id="KW-0963">Cytoplasm</keyword>
<keyword id="KW-0206">Cytoskeleton</keyword>
<keyword id="KW-0342">GTP-binding</keyword>
<keyword id="KW-0449">Lipoprotein</keyword>
<keyword id="KW-0460">Magnesium</keyword>
<keyword id="KW-0472">Membrane</keyword>
<keyword id="KW-0479">Metal-binding</keyword>
<keyword id="KW-0547">Nucleotide-binding</keyword>
<keyword id="KW-1185">Reference proteome</keyword>
<keyword id="KW-0807">Transducer</keyword>